<reference key="1">
    <citation type="journal article" date="2007" name="J. Bacteriol.">
        <title>Complete genome sequence of Haemophilus somnus (Histophilus somni) strain 129Pt and comparison to Haemophilus ducreyi 35000HP and Haemophilus influenzae Rd.</title>
        <authorList>
            <person name="Challacombe J.F."/>
            <person name="Duncan A.J."/>
            <person name="Brettin T.S."/>
            <person name="Bruce D."/>
            <person name="Chertkov O."/>
            <person name="Detter J.C."/>
            <person name="Han C.S."/>
            <person name="Misra M."/>
            <person name="Richardson P."/>
            <person name="Tapia R."/>
            <person name="Thayer N."/>
            <person name="Xie G."/>
            <person name="Inzana T.J."/>
        </authorList>
    </citation>
    <scope>NUCLEOTIDE SEQUENCE [LARGE SCALE GENOMIC DNA]</scope>
    <source>
        <strain>129Pt</strain>
    </source>
</reference>
<dbReference type="EMBL" id="CP000436">
    <property type="protein sequence ID" value="ABI25097.1"/>
    <property type="molecule type" value="Genomic_DNA"/>
</dbReference>
<dbReference type="SMR" id="Q0I3P4"/>
<dbReference type="KEGG" id="hso:HS_0822"/>
<dbReference type="eggNOG" id="COG0858">
    <property type="taxonomic scope" value="Bacteria"/>
</dbReference>
<dbReference type="HOGENOM" id="CLU_089475_5_0_6"/>
<dbReference type="GO" id="GO:0005829">
    <property type="term" value="C:cytosol"/>
    <property type="evidence" value="ECO:0007669"/>
    <property type="project" value="TreeGrafter"/>
</dbReference>
<dbReference type="GO" id="GO:0043024">
    <property type="term" value="F:ribosomal small subunit binding"/>
    <property type="evidence" value="ECO:0007669"/>
    <property type="project" value="TreeGrafter"/>
</dbReference>
<dbReference type="GO" id="GO:0030490">
    <property type="term" value="P:maturation of SSU-rRNA"/>
    <property type="evidence" value="ECO:0007669"/>
    <property type="project" value="UniProtKB-UniRule"/>
</dbReference>
<dbReference type="FunFam" id="3.30.300.20:FF:000007">
    <property type="entry name" value="Ribosome-binding factor A"/>
    <property type="match status" value="1"/>
</dbReference>
<dbReference type="Gene3D" id="3.30.300.20">
    <property type="match status" value="1"/>
</dbReference>
<dbReference type="HAMAP" id="MF_00003">
    <property type="entry name" value="RbfA"/>
    <property type="match status" value="1"/>
</dbReference>
<dbReference type="InterPro" id="IPR015946">
    <property type="entry name" value="KH_dom-like_a/b"/>
</dbReference>
<dbReference type="InterPro" id="IPR000238">
    <property type="entry name" value="RbfA"/>
</dbReference>
<dbReference type="InterPro" id="IPR023799">
    <property type="entry name" value="RbfA_dom_sf"/>
</dbReference>
<dbReference type="InterPro" id="IPR020053">
    <property type="entry name" value="Ribosome-bd_factorA_CS"/>
</dbReference>
<dbReference type="NCBIfam" id="TIGR00082">
    <property type="entry name" value="rbfA"/>
    <property type="match status" value="1"/>
</dbReference>
<dbReference type="PANTHER" id="PTHR33515">
    <property type="entry name" value="RIBOSOME-BINDING FACTOR A, CHLOROPLASTIC-RELATED"/>
    <property type="match status" value="1"/>
</dbReference>
<dbReference type="PANTHER" id="PTHR33515:SF1">
    <property type="entry name" value="RIBOSOME-BINDING FACTOR A, CHLOROPLASTIC-RELATED"/>
    <property type="match status" value="1"/>
</dbReference>
<dbReference type="Pfam" id="PF02033">
    <property type="entry name" value="RBFA"/>
    <property type="match status" value="1"/>
</dbReference>
<dbReference type="SUPFAM" id="SSF89919">
    <property type="entry name" value="Ribosome-binding factor A, RbfA"/>
    <property type="match status" value="1"/>
</dbReference>
<dbReference type="PROSITE" id="PS01319">
    <property type="entry name" value="RBFA"/>
    <property type="match status" value="1"/>
</dbReference>
<name>RBFA_HISS1</name>
<accession>Q0I3P4</accession>
<keyword id="KW-0963">Cytoplasm</keyword>
<keyword id="KW-0690">Ribosome biogenesis</keyword>
<sequence length="126" mass="14632">MAREFKRSDRVAQEIQKEVAVILQREVKDPRIGMVTVSDVEISSDLAYAKIFVTFLFDQDENVIEQGMKGLEKASPYIRSLLGKVMRLRIVPELRFIYDQSLVDGMRMSNLVTNVVREDEKRHVEE</sequence>
<comment type="function">
    <text evidence="1">One of several proteins that assist in the late maturation steps of the functional core of the 30S ribosomal subunit. Associates with free 30S ribosomal subunits (but not with 30S subunits that are part of 70S ribosomes or polysomes). Required for efficient processing of 16S rRNA. May interact with the 5'-terminal helix region of 16S rRNA.</text>
</comment>
<comment type="subunit">
    <text evidence="1">Monomer. Binds 30S ribosomal subunits, but not 50S ribosomal subunits or 70S ribosomes.</text>
</comment>
<comment type="subcellular location">
    <subcellularLocation>
        <location evidence="1">Cytoplasm</location>
    </subcellularLocation>
</comment>
<comment type="similarity">
    <text evidence="1">Belongs to the RbfA family.</text>
</comment>
<gene>
    <name evidence="1" type="primary">rbfA</name>
    <name type="ordered locus">HS_0822</name>
</gene>
<organism>
    <name type="scientific">Histophilus somni (strain 129Pt)</name>
    <name type="common">Haemophilus somnus</name>
    <dbReference type="NCBI Taxonomy" id="205914"/>
    <lineage>
        <taxon>Bacteria</taxon>
        <taxon>Pseudomonadati</taxon>
        <taxon>Pseudomonadota</taxon>
        <taxon>Gammaproteobacteria</taxon>
        <taxon>Pasteurellales</taxon>
        <taxon>Pasteurellaceae</taxon>
        <taxon>Histophilus</taxon>
    </lineage>
</organism>
<evidence type="ECO:0000255" key="1">
    <source>
        <dbReference type="HAMAP-Rule" id="MF_00003"/>
    </source>
</evidence>
<protein>
    <recommendedName>
        <fullName evidence="1">Ribosome-binding factor A</fullName>
    </recommendedName>
</protein>
<feature type="chain" id="PRO_1000000117" description="Ribosome-binding factor A">
    <location>
        <begin position="1"/>
        <end position="126"/>
    </location>
</feature>
<proteinExistence type="inferred from homology"/>